<reference key="1">
    <citation type="submission" date="2002-12" db="EMBL/GenBank/DDBJ databases">
        <title>Complete genome sequence of Vibrio vulnificus CMCP6.</title>
        <authorList>
            <person name="Rhee J.H."/>
            <person name="Kim S.Y."/>
            <person name="Chung S.S."/>
            <person name="Kim J.J."/>
            <person name="Moon Y.H."/>
            <person name="Jeong H."/>
            <person name="Choy H.E."/>
        </authorList>
    </citation>
    <scope>NUCLEOTIDE SEQUENCE [LARGE SCALE GENOMIC DNA]</scope>
    <source>
        <strain>CMCP6</strain>
    </source>
</reference>
<sequence>MIIYLHGFDSTSPGNHEKVLQLQFIDPDVRFINYSTLHPKHDMQHLLKEVHKAIEQSNDPEPIICGVGLGGYWSERIGFLCGIKQVIFNPNLHPENNMAGRIDRPEEYEDIATKCVEQFRMKNKGRCLVILSRDDEIHDNSKTAQALENYYEVVWDDKETHKFKKISQHLQKMKAFKENN</sequence>
<feature type="chain" id="PRO_0000070327" description="UPF0227 protein VV1_2072">
    <location>
        <begin position="1"/>
        <end position="180"/>
    </location>
</feature>
<accession>P59274</accession>
<dbReference type="EMBL" id="AE016795">
    <property type="protein sequence ID" value="AAO10461.1"/>
    <property type="molecule type" value="Genomic_DNA"/>
</dbReference>
<dbReference type="RefSeq" id="WP_011079960.1">
    <property type="nucleotide sequence ID" value="NC_004459.3"/>
</dbReference>
<dbReference type="SMR" id="P59274"/>
<dbReference type="ESTHER" id="vibvu-yk72">
    <property type="family name" value="abh_upf00227"/>
</dbReference>
<dbReference type="KEGG" id="vvu:VV1_2072"/>
<dbReference type="HOGENOM" id="CLU_128769_0_0_6"/>
<dbReference type="Proteomes" id="UP000002275">
    <property type="component" value="Chromosome 1"/>
</dbReference>
<dbReference type="Gene3D" id="3.40.50.1820">
    <property type="entry name" value="alpha/beta hydrolase"/>
    <property type="match status" value="1"/>
</dbReference>
<dbReference type="HAMAP" id="MF_01047">
    <property type="entry name" value="UPF0227"/>
    <property type="match status" value="1"/>
</dbReference>
<dbReference type="InterPro" id="IPR029058">
    <property type="entry name" value="AB_hydrolase_fold"/>
</dbReference>
<dbReference type="InterPro" id="IPR022987">
    <property type="entry name" value="UPF0227"/>
</dbReference>
<dbReference type="InterPro" id="IPR008886">
    <property type="entry name" value="UPF0227/Esterase_YqiA"/>
</dbReference>
<dbReference type="NCBIfam" id="NF003431">
    <property type="entry name" value="PRK04940.1"/>
    <property type="match status" value="1"/>
</dbReference>
<dbReference type="PANTHER" id="PTHR35602">
    <property type="entry name" value="ESTERASE YQIA-RELATED"/>
    <property type="match status" value="1"/>
</dbReference>
<dbReference type="PANTHER" id="PTHR35602:SF2">
    <property type="entry name" value="UPF0227 PROTEIN YCFP"/>
    <property type="match status" value="1"/>
</dbReference>
<dbReference type="Pfam" id="PF05728">
    <property type="entry name" value="UPF0227"/>
    <property type="match status" value="1"/>
</dbReference>
<dbReference type="SUPFAM" id="SSF53474">
    <property type="entry name" value="alpha/beta-Hydrolases"/>
    <property type="match status" value="1"/>
</dbReference>
<organism>
    <name type="scientific">Vibrio vulnificus (strain CMCP6)</name>
    <dbReference type="NCBI Taxonomy" id="216895"/>
    <lineage>
        <taxon>Bacteria</taxon>
        <taxon>Pseudomonadati</taxon>
        <taxon>Pseudomonadota</taxon>
        <taxon>Gammaproteobacteria</taxon>
        <taxon>Vibrionales</taxon>
        <taxon>Vibrionaceae</taxon>
        <taxon>Vibrio</taxon>
    </lineage>
</organism>
<gene>
    <name type="ordered locus">VV1_2072</name>
</gene>
<name>Y2072_VIBVU</name>
<comment type="similarity">
    <text evidence="1">Belongs to the UPF0227 family.</text>
</comment>
<protein>
    <recommendedName>
        <fullName evidence="1">UPF0227 protein VV1_2072</fullName>
    </recommendedName>
</protein>
<proteinExistence type="inferred from homology"/>
<evidence type="ECO:0000255" key="1">
    <source>
        <dbReference type="HAMAP-Rule" id="MF_01047"/>
    </source>
</evidence>